<name>RL27_STAA3</name>
<gene>
    <name evidence="2" type="primary">rpmA</name>
    <name type="ordered locus">SAUSA300_1601</name>
</gene>
<organism>
    <name type="scientific">Staphylococcus aureus (strain USA300)</name>
    <dbReference type="NCBI Taxonomy" id="367830"/>
    <lineage>
        <taxon>Bacteria</taxon>
        <taxon>Bacillati</taxon>
        <taxon>Bacillota</taxon>
        <taxon>Bacilli</taxon>
        <taxon>Bacillales</taxon>
        <taxon>Staphylococcaceae</taxon>
        <taxon>Staphylococcus</taxon>
    </lineage>
</organism>
<protein>
    <recommendedName>
        <fullName evidence="2">Large ribosomal subunit protein bL27</fullName>
    </recommendedName>
    <alternativeName>
        <fullName evidence="3">50S ribosomal protein L27</fullName>
    </alternativeName>
</protein>
<comment type="PTM">
    <text evidence="1">The N-terminus is cleaved by ribosomal processing cysteine protease Prp.</text>
</comment>
<comment type="similarity">
    <text evidence="2">Belongs to the bacterial ribosomal protein bL27 family.</text>
</comment>
<proteinExistence type="inferred from homology"/>
<sequence>MLKLNLQFFASKKGVSSTKNGRDSESKRLGAKRADGQFVTGGSILYRQRGTKIYPGENVGRGGDDTLFAKIDGVVKFERKGRDKKQVSVYAVAE</sequence>
<accession>Q2FG82</accession>
<feature type="propeptide" id="PRO_0000459939" evidence="1">
    <location>
        <begin position="1"/>
        <end position="9"/>
    </location>
</feature>
<feature type="chain" id="PRO_1000017618" description="Large ribosomal subunit protein bL27">
    <location>
        <begin position="10"/>
        <end position="94"/>
    </location>
</feature>
<dbReference type="EMBL" id="CP000255">
    <property type="protein sequence ID" value="ABD22316.1"/>
    <property type="molecule type" value="Genomic_DNA"/>
</dbReference>
<dbReference type="RefSeq" id="WP_000916187.1">
    <property type="nucleotide sequence ID" value="NZ_CP027476.1"/>
</dbReference>
<dbReference type="SMR" id="Q2FG82"/>
<dbReference type="GeneID" id="98346013"/>
<dbReference type="KEGG" id="saa:SAUSA300_1601"/>
<dbReference type="HOGENOM" id="CLU_095424_4_0_9"/>
<dbReference type="OMA" id="GKDHTLH"/>
<dbReference type="Proteomes" id="UP000001939">
    <property type="component" value="Chromosome"/>
</dbReference>
<dbReference type="GO" id="GO:0022625">
    <property type="term" value="C:cytosolic large ribosomal subunit"/>
    <property type="evidence" value="ECO:0007669"/>
    <property type="project" value="TreeGrafter"/>
</dbReference>
<dbReference type="GO" id="GO:0003735">
    <property type="term" value="F:structural constituent of ribosome"/>
    <property type="evidence" value="ECO:0007669"/>
    <property type="project" value="InterPro"/>
</dbReference>
<dbReference type="GO" id="GO:0006412">
    <property type="term" value="P:translation"/>
    <property type="evidence" value="ECO:0007669"/>
    <property type="project" value="UniProtKB-UniRule"/>
</dbReference>
<dbReference type="FunFam" id="2.40.50.100:FF:000004">
    <property type="entry name" value="50S ribosomal protein L27"/>
    <property type="match status" value="1"/>
</dbReference>
<dbReference type="Gene3D" id="2.40.50.100">
    <property type="match status" value="1"/>
</dbReference>
<dbReference type="HAMAP" id="MF_00539">
    <property type="entry name" value="Ribosomal_bL27"/>
    <property type="match status" value="1"/>
</dbReference>
<dbReference type="InterPro" id="IPR001684">
    <property type="entry name" value="Ribosomal_bL27"/>
</dbReference>
<dbReference type="InterPro" id="IPR018261">
    <property type="entry name" value="Ribosomal_bL27_CS"/>
</dbReference>
<dbReference type="NCBIfam" id="TIGR00062">
    <property type="entry name" value="L27"/>
    <property type="match status" value="1"/>
</dbReference>
<dbReference type="PANTHER" id="PTHR15893:SF0">
    <property type="entry name" value="LARGE RIBOSOMAL SUBUNIT PROTEIN BL27M"/>
    <property type="match status" value="1"/>
</dbReference>
<dbReference type="PANTHER" id="PTHR15893">
    <property type="entry name" value="RIBOSOMAL PROTEIN L27"/>
    <property type="match status" value="1"/>
</dbReference>
<dbReference type="Pfam" id="PF01016">
    <property type="entry name" value="Ribosomal_L27"/>
    <property type="match status" value="1"/>
</dbReference>
<dbReference type="PRINTS" id="PR00063">
    <property type="entry name" value="RIBOSOMALL27"/>
</dbReference>
<dbReference type="SUPFAM" id="SSF110324">
    <property type="entry name" value="Ribosomal L27 protein-like"/>
    <property type="match status" value="1"/>
</dbReference>
<dbReference type="PROSITE" id="PS00831">
    <property type="entry name" value="RIBOSOMAL_L27"/>
    <property type="match status" value="1"/>
</dbReference>
<reference key="1">
    <citation type="journal article" date="2006" name="Lancet">
        <title>Complete genome sequence of USA300, an epidemic clone of community-acquired meticillin-resistant Staphylococcus aureus.</title>
        <authorList>
            <person name="Diep B.A."/>
            <person name="Gill S.R."/>
            <person name="Chang R.F."/>
            <person name="Phan T.H."/>
            <person name="Chen J.H."/>
            <person name="Davidson M.G."/>
            <person name="Lin F."/>
            <person name="Lin J."/>
            <person name="Carleton H.A."/>
            <person name="Mongodin E.F."/>
            <person name="Sensabaugh G.F."/>
            <person name="Perdreau-Remington F."/>
        </authorList>
    </citation>
    <scope>NUCLEOTIDE SEQUENCE [LARGE SCALE GENOMIC DNA]</scope>
    <source>
        <strain>USA300</strain>
    </source>
</reference>
<keyword id="KW-0687">Ribonucleoprotein</keyword>
<keyword id="KW-0689">Ribosomal protein</keyword>
<evidence type="ECO:0000250" key="1">
    <source>
        <dbReference type="UniProtKB" id="Q2FXT0"/>
    </source>
</evidence>
<evidence type="ECO:0000255" key="2">
    <source>
        <dbReference type="HAMAP-Rule" id="MF_00539"/>
    </source>
</evidence>
<evidence type="ECO:0000305" key="3"/>